<comment type="function">
    <text evidence="1">Associates with proteins harboring glycine-rich transmembrane domains and ensures their efficient localization to the cell surface.</text>
</comment>
<comment type="subcellular location">
    <subcellularLocation>
        <location evidence="2">Membrane</location>
        <topology evidence="2">Multi-pass membrane protein</topology>
    </subcellularLocation>
    <subcellularLocation>
        <location evidence="1">Golgi apparatus</location>
    </subcellularLocation>
    <subcellularLocation>
        <location evidence="1">Early endosome</location>
    </subcellularLocation>
</comment>
<comment type="similarity">
    <text evidence="3">Belongs to the nonaspanin (TM9SF) (TC 9.A.2) family.</text>
</comment>
<dbReference type="EMBL" id="AB093220">
    <property type="protein sequence ID" value="BAC41404.3"/>
    <property type="molecule type" value="mRNA"/>
</dbReference>
<dbReference type="EMBL" id="AK048158">
    <property type="protein sequence ID" value="BAC33261.1"/>
    <property type="molecule type" value="mRNA"/>
</dbReference>
<dbReference type="EMBL" id="AK083541">
    <property type="protein sequence ID" value="BAC38948.1"/>
    <property type="molecule type" value="mRNA"/>
</dbReference>
<dbReference type="EMBL" id="AK087048">
    <property type="protein sequence ID" value="BAC39789.1"/>
    <property type="molecule type" value="mRNA"/>
</dbReference>
<dbReference type="EMBL" id="AK088012">
    <property type="protein sequence ID" value="BAC40094.1"/>
    <property type="molecule type" value="mRNA"/>
</dbReference>
<dbReference type="EMBL" id="AK162435">
    <property type="protein sequence ID" value="BAE36916.1"/>
    <property type="molecule type" value="mRNA"/>
</dbReference>
<dbReference type="EMBL" id="AK171487">
    <property type="protein sequence ID" value="BAE42487.1"/>
    <property type="molecule type" value="mRNA"/>
</dbReference>
<dbReference type="EMBL" id="AL807380">
    <property type="status" value="NOT_ANNOTATED_CDS"/>
    <property type="molecule type" value="Genomic_DNA"/>
</dbReference>
<dbReference type="EMBL" id="BC110309">
    <property type="protein sequence ID" value="AAI10310.1"/>
    <property type="molecule type" value="mRNA"/>
</dbReference>
<dbReference type="CCDS" id="CCDS16906.1"/>
<dbReference type="RefSeq" id="NP_598608.2">
    <property type="nucleotide sequence ID" value="NM_133847.3"/>
</dbReference>
<dbReference type="SMR" id="Q8BH24"/>
<dbReference type="FunCoup" id="Q8BH24">
    <property type="interactions" value="3884"/>
</dbReference>
<dbReference type="STRING" id="10090.ENSMUSP00000086422"/>
<dbReference type="GlyGen" id="Q8BH24">
    <property type="glycosylation" value="1 site, 1 N-linked glycan (1 site)"/>
</dbReference>
<dbReference type="PhosphoSitePlus" id="Q8BH24"/>
<dbReference type="SwissPalm" id="Q8BH24"/>
<dbReference type="jPOST" id="Q8BH24"/>
<dbReference type="PaxDb" id="10090-ENSMUSP00000086422"/>
<dbReference type="PeptideAtlas" id="Q8BH24"/>
<dbReference type="ProteomicsDB" id="262834"/>
<dbReference type="Pumba" id="Q8BH24"/>
<dbReference type="Antibodypedia" id="42955">
    <property type="antibodies" value="113 antibodies from 20 providers"/>
</dbReference>
<dbReference type="DNASU" id="99237"/>
<dbReference type="Ensembl" id="ENSMUST00000089027.3">
    <property type="protein sequence ID" value="ENSMUSP00000086422.3"/>
    <property type="gene ID" value="ENSMUSG00000068040.11"/>
</dbReference>
<dbReference type="GeneID" id="99237"/>
<dbReference type="KEGG" id="mmu:99237"/>
<dbReference type="UCSC" id="uc008nhd.1">
    <property type="organism name" value="mouse"/>
</dbReference>
<dbReference type="AGR" id="MGI:2139220"/>
<dbReference type="CTD" id="9777"/>
<dbReference type="MGI" id="MGI:2139220">
    <property type="gene designation" value="Tm9sf4"/>
</dbReference>
<dbReference type="VEuPathDB" id="HostDB:ENSMUSG00000068040"/>
<dbReference type="eggNOG" id="KOG1278">
    <property type="taxonomic scope" value="Eukaryota"/>
</dbReference>
<dbReference type="GeneTree" id="ENSGT00940000157198"/>
<dbReference type="HOGENOM" id="CLU_010714_4_1_1"/>
<dbReference type="InParanoid" id="Q8BH24"/>
<dbReference type="OMA" id="VVGFEVY"/>
<dbReference type="OrthoDB" id="1666796at2759"/>
<dbReference type="PhylomeDB" id="Q8BH24"/>
<dbReference type="TreeFam" id="TF354239"/>
<dbReference type="BioGRID-ORCS" id="99237">
    <property type="hits" value="3 hits in 77 CRISPR screens"/>
</dbReference>
<dbReference type="ChiTaRS" id="Tm9sf4">
    <property type="organism name" value="mouse"/>
</dbReference>
<dbReference type="PRO" id="PR:Q8BH24"/>
<dbReference type="Proteomes" id="UP000000589">
    <property type="component" value="Chromosome 2"/>
</dbReference>
<dbReference type="RNAct" id="Q8BH24">
    <property type="molecule type" value="protein"/>
</dbReference>
<dbReference type="Bgee" id="ENSMUSG00000068040">
    <property type="expression patterns" value="Expressed in humerus cartilage element and 255 other cell types or tissues"/>
</dbReference>
<dbReference type="GO" id="GO:0005769">
    <property type="term" value="C:early endosome"/>
    <property type="evidence" value="ECO:0000250"/>
    <property type="project" value="UniProtKB"/>
</dbReference>
<dbReference type="GO" id="GO:0005794">
    <property type="term" value="C:Golgi apparatus"/>
    <property type="evidence" value="ECO:0000250"/>
    <property type="project" value="UniProtKB"/>
</dbReference>
<dbReference type="GO" id="GO:0016020">
    <property type="term" value="C:membrane"/>
    <property type="evidence" value="ECO:0007669"/>
    <property type="project" value="UniProtKB-SubCell"/>
</dbReference>
<dbReference type="GO" id="GO:0007155">
    <property type="term" value="P:cell adhesion"/>
    <property type="evidence" value="ECO:0007669"/>
    <property type="project" value="Ensembl"/>
</dbReference>
<dbReference type="GO" id="GO:0006909">
    <property type="term" value="P:phagocytosis"/>
    <property type="evidence" value="ECO:0007669"/>
    <property type="project" value="Ensembl"/>
</dbReference>
<dbReference type="GO" id="GO:0070863">
    <property type="term" value="P:positive regulation of protein exit from endoplasmic reticulum"/>
    <property type="evidence" value="ECO:0000250"/>
    <property type="project" value="UniProtKB"/>
</dbReference>
<dbReference type="GO" id="GO:2000010">
    <property type="term" value="P:positive regulation of protein localization to cell surface"/>
    <property type="evidence" value="ECO:0000250"/>
    <property type="project" value="UniProtKB"/>
</dbReference>
<dbReference type="GO" id="GO:0051453">
    <property type="term" value="P:regulation of intracellular pH"/>
    <property type="evidence" value="ECO:0007669"/>
    <property type="project" value="Ensembl"/>
</dbReference>
<dbReference type="GO" id="GO:0001666">
    <property type="term" value="P:response to hypoxia"/>
    <property type="evidence" value="ECO:0007669"/>
    <property type="project" value="Ensembl"/>
</dbReference>
<dbReference type="GO" id="GO:0070072">
    <property type="term" value="P:vacuolar proton-transporting V-type ATPase complex assembly"/>
    <property type="evidence" value="ECO:0007669"/>
    <property type="project" value="Ensembl"/>
</dbReference>
<dbReference type="InterPro" id="IPR004240">
    <property type="entry name" value="EMP70"/>
</dbReference>
<dbReference type="PANTHER" id="PTHR10766:SF55">
    <property type="entry name" value="TRANSMEMBRANE 9 SUPERFAMILY MEMBER 4"/>
    <property type="match status" value="1"/>
</dbReference>
<dbReference type="PANTHER" id="PTHR10766">
    <property type="entry name" value="TRANSMEMBRANE 9 SUPERFAMILY PROTEIN"/>
    <property type="match status" value="1"/>
</dbReference>
<dbReference type="Pfam" id="PF02990">
    <property type="entry name" value="EMP70"/>
    <property type="match status" value="1"/>
</dbReference>
<protein>
    <recommendedName>
        <fullName>Transmembrane 9 superfamily member 4</fullName>
    </recommendedName>
</protein>
<sequence>MAAAMIWWPRFLLLLCLTCKGSTFYVPGVAPINFHQNDPVEIKAVKLTSSRTQLPYEYYSLPFCQPIKITYKAENLGEVLRGDRIVNTPFQVLMNSEKKCEVLCNQSNKPITLTVEQSRLVAERITEEYYVHLIADNLPVATRLELYSSNRDSDDKKKEKDVQFEHGYRLGFTDVNKIYLHNHLSFILYYHREDMEEDQEHTYRVVRFEVIPQSIRLEDLKTGEKSSCTLPEGANSLPQEIDPTKENQLYFTYSVHWEESDIKWASRWDTYLTMSDVQIHWFSIINSVVVVFFLSGILSMIIIRTLRKDIANYNKEDDIEDTMEESGWKLVHGDVFRPPQYPMILSSLLGSGIQLFCMILIVIFVAMLGMLSPSSRGALMTTACFLFMFMGVFGGFSAGRLYRTLKGHRWKKGAFCTATLYPGVVFGICFVLNCFIWGKHSSGAVPFPTMVALLCMWFGISLPLVYLGYYFGFRKQPYDNPVRTNQIPRQIPEQRWYMNRFVGILMAGILPFGAMFIELFFIFSAIWENQFYYLFGFLFLVFIILVVSCSQISIVMVYFQLCAEDYRWWWRNFLVSGGSAFYVLVYAIFYFVNKLDIVEFIPSLLYFGYTTLMVLSFWLLTGTIGFYAAYMFVRKIYAAVKID</sequence>
<feature type="signal peptide" evidence="2">
    <location>
        <begin position="1"/>
        <end position="23"/>
    </location>
</feature>
<feature type="chain" id="PRO_0000311810" description="Transmembrane 9 superfamily member 4">
    <location>
        <begin position="24"/>
        <end position="643"/>
    </location>
</feature>
<feature type="topological domain" description="Extracellular" evidence="2">
    <location>
        <begin position="24"/>
        <end position="282"/>
    </location>
</feature>
<feature type="transmembrane region" description="Helical" evidence="2">
    <location>
        <begin position="283"/>
        <end position="303"/>
    </location>
</feature>
<feature type="topological domain" description="Cytoplasmic" evidence="2">
    <location>
        <begin position="304"/>
        <end position="347"/>
    </location>
</feature>
<feature type="transmembrane region" description="Helical" evidence="2">
    <location>
        <begin position="348"/>
        <end position="368"/>
    </location>
</feature>
<feature type="topological domain" description="Extracellular" evidence="2">
    <location>
        <begin position="369"/>
        <end position="377"/>
    </location>
</feature>
<feature type="transmembrane region" description="Helical" evidence="2">
    <location>
        <begin position="378"/>
        <end position="398"/>
    </location>
</feature>
<feature type="topological domain" description="Cytoplasmic" evidence="2">
    <location>
        <begin position="399"/>
        <end position="417"/>
    </location>
</feature>
<feature type="transmembrane region" description="Helical" evidence="2">
    <location>
        <begin position="418"/>
        <end position="438"/>
    </location>
</feature>
<feature type="topological domain" description="Extracellular" evidence="2">
    <location>
        <begin position="439"/>
        <end position="450"/>
    </location>
</feature>
<feature type="transmembrane region" description="Helical" evidence="2">
    <location>
        <begin position="451"/>
        <end position="471"/>
    </location>
</feature>
<feature type="topological domain" description="Cytoplasmic" evidence="2">
    <location>
        <begin position="472"/>
        <end position="502"/>
    </location>
</feature>
<feature type="transmembrane region" description="Helical" evidence="2">
    <location>
        <begin position="503"/>
        <end position="523"/>
    </location>
</feature>
<feature type="topological domain" description="Extracellular" evidence="2">
    <location>
        <begin position="524"/>
        <end position="536"/>
    </location>
</feature>
<feature type="transmembrane region" description="Helical" evidence="2">
    <location>
        <begin position="537"/>
        <end position="557"/>
    </location>
</feature>
<feature type="topological domain" description="Cytoplasmic" evidence="2">
    <location>
        <begin position="558"/>
        <end position="571"/>
    </location>
</feature>
<feature type="transmembrane region" description="Helical" evidence="2">
    <location>
        <begin position="572"/>
        <end position="592"/>
    </location>
</feature>
<feature type="topological domain" description="Extracellular" evidence="2">
    <location>
        <begin position="593"/>
        <end position="599"/>
    </location>
</feature>
<feature type="transmembrane region" description="Helical" evidence="2">
    <location>
        <begin position="600"/>
        <end position="620"/>
    </location>
</feature>
<feature type="topological domain" description="Cytoplasmic" evidence="2">
    <location>
        <begin position="621"/>
        <end position="643"/>
    </location>
</feature>
<feature type="modified residue" description="Phosphotyrosine" evidence="1">
    <location>
        <position position="313"/>
    </location>
</feature>
<feature type="sequence conflict" description="In Ref. 4; AAI10310." evidence="3" ref="4">
    <original>F</original>
    <variation>S</variation>
    <location>
        <position position="63"/>
    </location>
</feature>
<feature type="sequence conflict" description="In Ref. 2; BAC39789." evidence="3" ref="2">
    <original>I</original>
    <variation>V</variation>
    <location>
        <position position="344"/>
    </location>
</feature>
<feature type="sequence conflict" description="In Ref. 2; BAC33261." evidence="3" ref="2">
    <original>N</original>
    <variation>K</variation>
    <location>
        <position position="485"/>
    </location>
</feature>
<feature type="sequence conflict" description="In Ref. 2; BAE42487." evidence="3" ref="2">
    <original>F</original>
    <variation>S</variation>
    <location>
        <position position="589"/>
    </location>
</feature>
<reference key="1">
    <citation type="submission" date="2002-10" db="EMBL/GenBank/DDBJ databases">
        <title>Prediction of the coding sequences of mouse homologues of KIAA gene: I. The complete nucleotide sequences of 100 mouse KIAA-homologous cDNAs identified by screening of terminal sequences of cDNA clones randomly sampled from size-fractionated libraries.</title>
        <authorList>
            <person name="Okazaki N."/>
            <person name="Kikuno R."/>
            <person name="Ohara R."/>
            <person name="Inamoto S."/>
            <person name="Hara Y."/>
            <person name="Nagase T."/>
            <person name="Ohara O."/>
            <person name="Koga H."/>
        </authorList>
    </citation>
    <scope>NUCLEOTIDE SEQUENCE [LARGE SCALE MRNA]</scope>
    <source>
        <tissue>Embryonic tail</tissue>
    </source>
</reference>
<reference key="2">
    <citation type="journal article" date="2005" name="Science">
        <title>The transcriptional landscape of the mammalian genome.</title>
        <authorList>
            <person name="Carninci P."/>
            <person name="Kasukawa T."/>
            <person name="Katayama S."/>
            <person name="Gough J."/>
            <person name="Frith M.C."/>
            <person name="Maeda N."/>
            <person name="Oyama R."/>
            <person name="Ravasi T."/>
            <person name="Lenhard B."/>
            <person name="Wells C."/>
            <person name="Kodzius R."/>
            <person name="Shimokawa K."/>
            <person name="Bajic V.B."/>
            <person name="Brenner S.E."/>
            <person name="Batalov S."/>
            <person name="Forrest A.R."/>
            <person name="Zavolan M."/>
            <person name="Davis M.J."/>
            <person name="Wilming L.G."/>
            <person name="Aidinis V."/>
            <person name="Allen J.E."/>
            <person name="Ambesi-Impiombato A."/>
            <person name="Apweiler R."/>
            <person name="Aturaliya R.N."/>
            <person name="Bailey T.L."/>
            <person name="Bansal M."/>
            <person name="Baxter L."/>
            <person name="Beisel K.W."/>
            <person name="Bersano T."/>
            <person name="Bono H."/>
            <person name="Chalk A.M."/>
            <person name="Chiu K.P."/>
            <person name="Choudhary V."/>
            <person name="Christoffels A."/>
            <person name="Clutterbuck D.R."/>
            <person name="Crowe M.L."/>
            <person name="Dalla E."/>
            <person name="Dalrymple B.P."/>
            <person name="de Bono B."/>
            <person name="Della Gatta G."/>
            <person name="di Bernardo D."/>
            <person name="Down T."/>
            <person name="Engstrom P."/>
            <person name="Fagiolini M."/>
            <person name="Faulkner G."/>
            <person name="Fletcher C.F."/>
            <person name="Fukushima T."/>
            <person name="Furuno M."/>
            <person name="Futaki S."/>
            <person name="Gariboldi M."/>
            <person name="Georgii-Hemming P."/>
            <person name="Gingeras T.R."/>
            <person name="Gojobori T."/>
            <person name="Green R.E."/>
            <person name="Gustincich S."/>
            <person name="Harbers M."/>
            <person name="Hayashi Y."/>
            <person name="Hensch T.K."/>
            <person name="Hirokawa N."/>
            <person name="Hill D."/>
            <person name="Huminiecki L."/>
            <person name="Iacono M."/>
            <person name="Ikeo K."/>
            <person name="Iwama A."/>
            <person name="Ishikawa T."/>
            <person name="Jakt M."/>
            <person name="Kanapin A."/>
            <person name="Katoh M."/>
            <person name="Kawasawa Y."/>
            <person name="Kelso J."/>
            <person name="Kitamura H."/>
            <person name="Kitano H."/>
            <person name="Kollias G."/>
            <person name="Krishnan S.P."/>
            <person name="Kruger A."/>
            <person name="Kummerfeld S.K."/>
            <person name="Kurochkin I.V."/>
            <person name="Lareau L.F."/>
            <person name="Lazarevic D."/>
            <person name="Lipovich L."/>
            <person name="Liu J."/>
            <person name="Liuni S."/>
            <person name="McWilliam S."/>
            <person name="Madan Babu M."/>
            <person name="Madera M."/>
            <person name="Marchionni L."/>
            <person name="Matsuda H."/>
            <person name="Matsuzawa S."/>
            <person name="Miki H."/>
            <person name="Mignone F."/>
            <person name="Miyake S."/>
            <person name="Morris K."/>
            <person name="Mottagui-Tabar S."/>
            <person name="Mulder N."/>
            <person name="Nakano N."/>
            <person name="Nakauchi H."/>
            <person name="Ng P."/>
            <person name="Nilsson R."/>
            <person name="Nishiguchi S."/>
            <person name="Nishikawa S."/>
            <person name="Nori F."/>
            <person name="Ohara O."/>
            <person name="Okazaki Y."/>
            <person name="Orlando V."/>
            <person name="Pang K.C."/>
            <person name="Pavan W.J."/>
            <person name="Pavesi G."/>
            <person name="Pesole G."/>
            <person name="Petrovsky N."/>
            <person name="Piazza S."/>
            <person name="Reed J."/>
            <person name="Reid J.F."/>
            <person name="Ring B.Z."/>
            <person name="Ringwald M."/>
            <person name="Rost B."/>
            <person name="Ruan Y."/>
            <person name="Salzberg S.L."/>
            <person name="Sandelin A."/>
            <person name="Schneider C."/>
            <person name="Schoenbach C."/>
            <person name="Sekiguchi K."/>
            <person name="Semple C.A."/>
            <person name="Seno S."/>
            <person name="Sessa L."/>
            <person name="Sheng Y."/>
            <person name="Shibata Y."/>
            <person name="Shimada H."/>
            <person name="Shimada K."/>
            <person name="Silva D."/>
            <person name="Sinclair B."/>
            <person name="Sperling S."/>
            <person name="Stupka E."/>
            <person name="Sugiura K."/>
            <person name="Sultana R."/>
            <person name="Takenaka Y."/>
            <person name="Taki K."/>
            <person name="Tammoja K."/>
            <person name="Tan S.L."/>
            <person name="Tang S."/>
            <person name="Taylor M.S."/>
            <person name="Tegner J."/>
            <person name="Teichmann S.A."/>
            <person name="Ueda H.R."/>
            <person name="van Nimwegen E."/>
            <person name="Verardo R."/>
            <person name="Wei C.L."/>
            <person name="Yagi K."/>
            <person name="Yamanishi H."/>
            <person name="Zabarovsky E."/>
            <person name="Zhu S."/>
            <person name="Zimmer A."/>
            <person name="Hide W."/>
            <person name="Bult C."/>
            <person name="Grimmond S.M."/>
            <person name="Teasdale R.D."/>
            <person name="Liu E.T."/>
            <person name="Brusic V."/>
            <person name="Quackenbush J."/>
            <person name="Wahlestedt C."/>
            <person name="Mattick J.S."/>
            <person name="Hume D.A."/>
            <person name="Kai C."/>
            <person name="Sasaki D."/>
            <person name="Tomaru Y."/>
            <person name="Fukuda S."/>
            <person name="Kanamori-Katayama M."/>
            <person name="Suzuki M."/>
            <person name="Aoki J."/>
            <person name="Arakawa T."/>
            <person name="Iida J."/>
            <person name="Imamura K."/>
            <person name="Itoh M."/>
            <person name="Kato T."/>
            <person name="Kawaji H."/>
            <person name="Kawagashira N."/>
            <person name="Kawashima T."/>
            <person name="Kojima M."/>
            <person name="Kondo S."/>
            <person name="Konno H."/>
            <person name="Nakano K."/>
            <person name="Ninomiya N."/>
            <person name="Nishio T."/>
            <person name="Okada M."/>
            <person name="Plessy C."/>
            <person name="Shibata K."/>
            <person name="Shiraki T."/>
            <person name="Suzuki S."/>
            <person name="Tagami M."/>
            <person name="Waki K."/>
            <person name="Watahiki A."/>
            <person name="Okamura-Oho Y."/>
            <person name="Suzuki H."/>
            <person name="Kawai J."/>
            <person name="Hayashizaki Y."/>
        </authorList>
    </citation>
    <scope>NUCLEOTIDE SEQUENCE [LARGE SCALE MRNA]</scope>
    <source>
        <strain>C57BL/6J</strain>
        <strain>NOD</strain>
        <tissue>Head</tissue>
        <tissue>Lung</tissue>
        <tissue>Thymus</tissue>
    </source>
</reference>
<reference key="3">
    <citation type="journal article" date="2009" name="PLoS Biol.">
        <title>Lineage-specific biology revealed by a finished genome assembly of the mouse.</title>
        <authorList>
            <person name="Church D.M."/>
            <person name="Goodstadt L."/>
            <person name="Hillier L.W."/>
            <person name="Zody M.C."/>
            <person name="Goldstein S."/>
            <person name="She X."/>
            <person name="Bult C.J."/>
            <person name="Agarwala R."/>
            <person name="Cherry J.L."/>
            <person name="DiCuccio M."/>
            <person name="Hlavina W."/>
            <person name="Kapustin Y."/>
            <person name="Meric P."/>
            <person name="Maglott D."/>
            <person name="Birtle Z."/>
            <person name="Marques A.C."/>
            <person name="Graves T."/>
            <person name="Zhou S."/>
            <person name="Teague B."/>
            <person name="Potamousis K."/>
            <person name="Churas C."/>
            <person name="Place M."/>
            <person name="Herschleb J."/>
            <person name="Runnheim R."/>
            <person name="Forrest D."/>
            <person name="Amos-Landgraf J."/>
            <person name="Schwartz D.C."/>
            <person name="Cheng Z."/>
            <person name="Lindblad-Toh K."/>
            <person name="Eichler E.E."/>
            <person name="Ponting C.P."/>
        </authorList>
    </citation>
    <scope>NUCLEOTIDE SEQUENCE [LARGE SCALE GENOMIC DNA]</scope>
    <source>
        <strain>C57BL/6J</strain>
    </source>
</reference>
<reference key="4">
    <citation type="journal article" date="2004" name="Genome Res.">
        <title>The status, quality, and expansion of the NIH full-length cDNA project: the Mammalian Gene Collection (MGC).</title>
        <authorList>
            <consortium name="The MGC Project Team"/>
        </authorList>
    </citation>
    <scope>NUCLEOTIDE SEQUENCE [LARGE SCALE MRNA]</scope>
    <source>
        <strain>FVB/N</strain>
        <tissue>Mammary tumor</tissue>
    </source>
</reference>
<reference key="5">
    <citation type="journal article" date="2010" name="Cell">
        <title>A tissue-specific atlas of mouse protein phosphorylation and expression.</title>
        <authorList>
            <person name="Huttlin E.L."/>
            <person name="Jedrychowski M.P."/>
            <person name="Elias J.E."/>
            <person name="Goswami T."/>
            <person name="Rad R."/>
            <person name="Beausoleil S.A."/>
            <person name="Villen J."/>
            <person name="Haas W."/>
            <person name="Sowa M.E."/>
            <person name="Gygi S.P."/>
        </authorList>
    </citation>
    <scope>IDENTIFICATION BY MASS SPECTROMETRY [LARGE SCALE ANALYSIS]</scope>
    <source>
        <tissue>Brown adipose tissue</tissue>
        <tissue>Kidney</tissue>
        <tissue>Liver</tissue>
        <tissue>Pancreas</tissue>
        <tissue>Spleen</tissue>
        <tissue>Testis</tissue>
    </source>
</reference>
<evidence type="ECO:0000250" key="1">
    <source>
        <dbReference type="UniProtKB" id="Q92544"/>
    </source>
</evidence>
<evidence type="ECO:0000255" key="2"/>
<evidence type="ECO:0000305" key="3"/>
<keyword id="KW-0967">Endosome</keyword>
<keyword id="KW-0333">Golgi apparatus</keyword>
<keyword id="KW-0472">Membrane</keyword>
<keyword id="KW-0597">Phosphoprotein</keyword>
<keyword id="KW-1185">Reference proteome</keyword>
<keyword id="KW-0732">Signal</keyword>
<keyword id="KW-0812">Transmembrane</keyword>
<keyword id="KW-1133">Transmembrane helix</keyword>
<organism>
    <name type="scientific">Mus musculus</name>
    <name type="common">Mouse</name>
    <dbReference type="NCBI Taxonomy" id="10090"/>
    <lineage>
        <taxon>Eukaryota</taxon>
        <taxon>Metazoa</taxon>
        <taxon>Chordata</taxon>
        <taxon>Craniata</taxon>
        <taxon>Vertebrata</taxon>
        <taxon>Euteleostomi</taxon>
        <taxon>Mammalia</taxon>
        <taxon>Eutheria</taxon>
        <taxon>Euarchontoglires</taxon>
        <taxon>Glires</taxon>
        <taxon>Rodentia</taxon>
        <taxon>Myomorpha</taxon>
        <taxon>Muroidea</taxon>
        <taxon>Muridae</taxon>
        <taxon>Murinae</taxon>
        <taxon>Mus</taxon>
        <taxon>Mus</taxon>
    </lineage>
</organism>
<gene>
    <name type="primary">Tm9sf4</name>
    <name type="synonym">Kiaa0255</name>
</gene>
<proteinExistence type="evidence at protein level"/>
<accession>Q8BH24</accession>
<accession>Q2TBF8</accession>
<accession>Q3TB27</accession>
<accession>Q8BU80</accession>
<accession>Q8BXB4</accession>
<accession>Q8CHH4</accession>
<name>TM9S4_MOUSE</name>